<comment type="similarity">
    <text evidence="3">Belongs to the OXR1 family.</text>
</comment>
<keyword id="KW-1185">Reference proteome</keyword>
<accession>Q0IID2</accession>
<sequence>MKSLRWRYTRLPSQVEDALSGEEDKEEEEEKEEETTPAPTPVPEHPMVPQLAGASQVLGASEMSQLSLHLPPRVTGYSWSLAFCTSRDGFSLQSLYRQMEGHSGPVLLVLRDQDGQMFGAFSSSALRLSKGFYGTGETFLFSFSPQLKVFKWTGSNSFFVKGDLDSLMMGCGSGRFGLWLDGDLYRGGSHPCATFNNEVLARQEQFCISELEAWVLS</sequence>
<protein>
    <recommendedName>
        <fullName>TLD domain-containing protein 2</fullName>
    </recommendedName>
    <alternativeName>
        <fullName>TBC/LysM-associated domain-containing protein 2</fullName>
    </alternativeName>
</protein>
<name>TLDC2_BOVIN</name>
<proteinExistence type="evidence at transcript level"/>
<reference key="1">
    <citation type="submission" date="2006-08" db="EMBL/GenBank/DDBJ databases">
        <authorList>
            <consortium name="NIH - Mammalian Gene Collection (MGC) project"/>
        </authorList>
    </citation>
    <scope>NUCLEOTIDE SEQUENCE [LARGE SCALE MRNA]</scope>
    <source>
        <strain>Crossbred X Angus</strain>
        <tissue>Ileum</tissue>
    </source>
</reference>
<feature type="chain" id="PRO_0000318689" description="TLD domain-containing protein 2">
    <location>
        <begin position="1"/>
        <end position="217"/>
    </location>
</feature>
<feature type="domain" description="TLDc" evidence="1">
    <location>
        <begin position="56"/>
        <end position="217"/>
    </location>
</feature>
<feature type="region of interest" description="Disordered" evidence="2">
    <location>
        <begin position="1"/>
        <end position="48"/>
    </location>
</feature>
<feature type="compositionally biased region" description="Acidic residues" evidence="2">
    <location>
        <begin position="19"/>
        <end position="35"/>
    </location>
</feature>
<organism>
    <name type="scientific">Bos taurus</name>
    <name type="common">Bovine</name>
    <dbReference type="NCBI Taxonomy" id="9913"/>
    <lineage>
        <taxon>Eukaryota</taxon>
        <taxon>Metazoa</taxon>
        <taxon>Chordata</taxon>
        <taxon>Craniata</taxon>
        <taxon>Vertebrata</taxon>
        <taxon>Euteleostomi</taxon>
        <taxon>Mammalia</taxon>
        <taxon>Eutheria</taxon>
        <taxon>Laurasiatheria</taxon>
        <taxon>Artiodactyla</taxon>
        <taxon>Ruminantia</taxon>
        <taxon>Pecora</taxon>
        <taxon>Bovidae</taxon>
        <taxon>Bovinae</taxon>
        <taxon>Bos</taxon>
    </lineage>
</organism>
<dbReference type="EMBL" id="BC122702">
    <property type="protein sequence ID" value="AAI22703.1"/>
    <property type="molecule type" value="mRNA"/>
</dbReference>
<dbReference type="RefSeq" id="NP_001069058.1">
    <property type="nucleotide sequence ID" value="NM_001075590.2"/>
</dbReference>
<dbReference type="RefSeq" id="XP_005214731.1">
    <property type="nucleotide sequence ID" value="XM_005214674.5"/>
</dbReference>
<dbReference type="SMR" id="Q0IID2"/>
<dbReference type="FunCoup" id="Q0IID2">
    <property type="interactions" value="71"/>
</dbReference>
<dbReference type="STRING" id="9913.ENSBTAP00000072994"/>
<dbReference type="PaxDb" id="9913-ENSBTAP00000029352"/>
<dbReference type="Ensembl" id="ENSBTAT00000029352.3">
    <property type="protein sequence ID" value="ENSBTAP00000029352.2"/>
    <property type="gene ID" value="ENSBTAG00000022005.5"/>
</dbReference>
<dbReference type="GeneID" id="512927"/>
<dbReference type="KEGG" id="bta:512927"/>
<dbReference type="CTD" id="140711"/>
<dbReference type="VEuPathDB" id="HostDB:ENSBTAG00000022005"/>
<dbReference type="VGNC" id="VGNC:35890">
    <property type="gene designation" value="TLDC2"/>
</dbReference>
<dbReference type="eggNOG" id="KOG2372">
    <property type="taxonomic scope" value="Eukaryota"/>
</dbReference>
<dbReference type="GeneTree" id="ENSGT00940000161648"/>
<dbReference type="HOGENOM" id="CLU_029204_4_1_1"/>
<dbReference type="InParanoid" id="Q0IID2"/>
<dbReference type="OMA" id="HYGLWCD"/>
<dbReference type="TreeFam" id="TF316541"/>
<dbReference type="Proteomes" id="UP000009136">
    <property type="component" value="Chromosome 13"/>
</dbReference>
<dbReference type="Bgee" id="ENSBTAG00000022005">
    <property type="expression patterns" value="Expressed in cortex of kidney and 80 other cell types or tissues"/>
</dbReference>
<dbReference type="GO" id="GO:0005634">
    <property type="term" value="C:nucleus"/>
    <property type="evidence" value="ECO:0000318"/>
    <property type="project" value="GO_Central"/>
</dbReference>
<dbReference type="GO" id="GO:0006979">
    <property type="term" value="P:response to oxidative stress"/>
    <property type="evidence" value="ECO:0000318"/>
    <property type="project" value="GO_Central"/>
</dbReference>
<dbReference type="InterPro" id="IPR006571">
    <property type="entry name" value="TLDc_dom"/>
</dbReference>
<dbReference type="PANTHER" id="PTHR23354">
    <property type="entry name" value="NUCLEOLAR PROTEIN 7/ESTROGEN RECEPTOR COACTIVATOR-RELATED"/>
    <property type="match status" value="1"/>
</dbReference>
<dbReference type="PANTHER" id="PTHR23354:SF65">
    <property type="entry name" value="TLD DOMAIN-CONTAINING PROTEIN 2"/>
    <property type="match status" value="1"/>
</dbReference>
<dbReference type="Pfam" id="PF07534">
    <property type="entry name" value="TLD"/>
    <property type="match status" value="1"/>
</dbReference>
<dbReference type="SMART" id="SM00584">
    <property type="entry name" value="TLDc"/>
    <property type="match status" value="1"/>
</dbReference>
<dbReference type="PROSITE" id="PS51886">
    <property type="entry name" value="TLDC"/>
    <property type="match status" value="1"/>
</dbReference>
<evidence type="ECO:0000255" key="1">
    <source>
        <dbReference type="PROSITE-ProRule" id="PRU01234"/>
    </source>
</evidence>
<evidence type="ECO:0000256" key="2">
    <source>
        <dbReference type="SAM" id="MobiDB-lite"/>
    </source>
</evidence>
<evidence type="ECO:0000305" key="3"/>
<gene>
    <name type="primary">TLDC2</name>
</gene>